<name>PYRB_STRCO</name>
<keyword id="KW-0665">Pyrimidine biosynthesis</keyword>
<keyword id="KW-1185">Reference proteome</keyword>
<keyword id="KW-0808">Transferase</keyword>
<protein>
    <recommendedName>
        <fullName evidence="1">Aspartate carbamoyltransferase catalytic subunit</fullName>
        <ecNumber evidence="1">2.1.3.2</ecNumber>
    </recommendedName>
    <alternativeName>
        <fullName evidence="1">Aspartate transcarbamylase</fullName>
        <shortName evidence="1">ATCase</shortName>
    </alternativeName>
</protein>
<sequence>MQRHLISAADLTRDDAVLILDTAEEMARVADRPIKKLPTLRGRTVVNLFFEDSTRTRISFEAAEKRLSADVINFTAKGSSVSKGESLKDTAQTLEAMGVDAVVIRHSASGAPYRLATSGWIDAAVVNAGDGTHQHPTQALLDAFTMRRRLVGRDAGLGKDLDGRRITLVGDILHSRVARSNVDLLHTLGAEVTLVAPPTLLPVGVETWPCEVSYDLDSTLPKSDAVMLLRVQRERMNAAFFPTEREYSRRYGLDGDRMAKMPDHAIVMHPGPMVRGMEITAEVADSDRCTVVEQVTNGVSIRMAVLYLLLGGNEPAVSHARPIEEK</sequence>
<proteinExistence type="inferred from homology"/>
<evidence type="ECO:0000255" key="1">
    <source>
        <dbReference type="HAMAP-Rule" id="MF_00001"/>
    </source>
</evidence>
<feature type="chain" id="PRO_0000113204" description="Aspartate carbamoyltransferase catalytic subunit">
    <location>
        <begin position="1"/>
        <end position="326"/>
    </location>
</feature>
<feature type="binding site" evidence="1">
    <location>
        <position position="55"/>
    </location>
    <ligand>
        <name>carbamoyl phosphate</name>
        <dbReference type="ChEBI" id="CHEBI:58228"/>
    </ligand>
</feature>
<feature type="binding site" evidence="1">
    <location>
        <position position="56"/>
    </location>
    <ligand>
        <name>carbamoyl phosphate</name>
        <dbReference type="ChEBI" id="CHEBI:58228"/>
    </ligand>
</feature>
<feature type="binding site" evidence="1">
    <location>
        <position position="83"/>
    </location>
    <ligand>
        <name>L-aspartate</name>
        <dbReference type="ChEBI" id="CHEBI:29991"/>
    </ligand>
</feature>
<feature type="binding site" evidence="1">
    <location>
        <position position="105"/>
    </location>
    <ligand>
        <name>carbamoyl phosphate</name>
        <dbReference type="ChEBI" id="CHEBI:58228"/>
    </ligand>
</feature>
<feature type="binding site" evidence="1">
    <location>
        <position position="135"/>
    </location>
    <ligand>
        <name>carbamoyl phosphate</name>
        <dbReference type="ChEBI" id="CHEBI:58228"/>
    </ligand>
</feature>
<feature type="binding site" evidence="1">
    <location>
        <position position="138"/>
    </location>
    <ligand>
        <name>carbamoyl phosphate</name>
        <dbReference type="ChEBI" id="CHEBI:58228"/>
    </ligand>
</feature>
<feature type="binding site" evidence="1">
    <location>
        <position position="176"/>
    </location>
    <ligand>
        <name>L-aspartate</name>
        <dbReference type="ChEBI" id="CHEBI:29991"/>
    </ligand>
</feature>
<feature type="binding site" evidence="1">
    <location>
        <position position="230"/>
    </location>
    <ligand>
        <name>L-aspartate</name>
        <dbReference type="ChEBI" id="CHEBI:29991"/>
    </ligand>
</feature>
<feature type="binding site" evidence="1">
    <location>
        <position position="271"/>
    </location>
    <ligand>
        <name>carbamoyl phosphate</name>
        <dbReference type="ChEBI" id="CHEBI:58228"/>
    </ligand>
</feature>
<feature type="binding site" evidence="1">
    <location>
        <position position="272"/>
    </location>
    <ligand>
        <name>carbamoyl phosphate</name>
        <dbReference type="ChEBI" id="CHEBI:58228"/>
    </ligand>
</feature>
<reference key="1">
    <citation type="journal article" date="2002" name="Nature">
        <title>Complete genome sequence of the model actinomycete Streptomyces coelicolor A3(2).</title>
        <authorList>
            <person name="Bentley S.D."/>
            <person name="Chater K.F."/>
            <person name="Cerdeno-Tarraga A.-M."/>
            <person name="Challis G.L."/>
            <person name="Thomson N.R."/>
            <person name="James K.D."/>
            <person name="Harris D.E."/>
            <person name="Quail M.A."/>
            <person name="Kieser H."/>
            <person name="Harper D."/>
            <person name="Bateman A."/>
            <person name="Brown S."/>
            <person name="Chandra G."/>
            <person name="Chen C.W."/>
            <person name="Collins M."/>
            <person name="Cronin A."/>
            <person name="Fraser A."/>
            <person name="Goble A."/>
            <person name="Hidalgo J."/>
            <person name="Hornsby T."/>
            <person name="Howarth S."/>
            <person name="Huang C.-H."/>
            <person name="Kieser T."/>
            <person name="Larke L."/>
            <person name="Murphy L.D."/>
            <person name="Oliver K."/>
            <person name="O'Neil S."/>
            <person name="Rabbinowitsch E."/>
            <person name="Rajandream M.A."/>
            <person name="Rutherford K.M."/>
            <person name="Rutter S."/>
            <person name="Seeger K."/>
            <person name="Saunders D."/>
            <person name="Sharp S."/>
            <person name="Squares R."/>
            <person name="Squares S."/>
            <person name="Taylor K."/>
            <person name="Warren T."/>
            <person name="Wietzorrek A."/>
            <person name="Woodward J.R."/>
            <person name="Barrell B.G."/>
            <person name="Parkhill J."/>
            <person name="Hopwood D.A."/>
        </authorList>
    </citation>
    <scope>NUCLEOTIDE SEQUENCE [LARGE SCALE GENOMIC DNA]</scope>
    <source>
        <strain>ATCC BAA-471 / A3(2) / M145</strain>
    </source>
</reference>
<gene>
    <name evidence="1" type="primary">pyrB</name>
    <name type="ordered locus">SCO1487</name>
    <name type="ORF">SC9C5.11c</name>
</gene>
<dbReference type="EC" id="2.1.3.2" evidence="1"/>
<dbReference type="EMBL" id="AL939109">
    <property type="protein sequence ID" value="CAB93367.1"/>
    <property type="molecule type" value="Genomic_DNA"/>
</dbReference>
<dbReference type="RefSeq" id="NP_625767.1">
    <property type="nucleotide sequence ID" value="NC_003888.3"/>
</dbReference>
<dbReference type="RefSeq" id="WP_011027811.1">
    <property type="nucleotide sequence ID" value="NZ_VNID01000021.1"/>
</dbReference>
<dbReference type="SMR" id="Q9KXR2"/>
<dbReference type="FunCoup" id="Q9KXR2">
    <property type="interactions" value="373"/>
</dbReference>
<dbReference type="STRING" id="100226.gene:17759073"/>
<dbReference type="PaxDb" id="100226-SCO1487"/>
<dbReference type="KEGG" id="sco:SCO1487"/>
<dbReference type="PATRIC" id="fig|100226.15.peg.1496"/>
<dbReference type="eggNOG" id="COG0540">
    <property type="taxonomic scope" value="Bacteria"/>
</dbReference>
<dbReference type="HOGENOM" id="CLU_043846_2_0_11"/>
<dbReference type="InParanoid" id="Q9KXR2"/>
<dbReference type="OrthoDB" id="9774690at2"/>
<dbReference type="PhylomeDB" id="Q9KXR2"/>
<dbReference type="UniPathway" id="UPA00070">
    <property type="reaction ID" value="UER00116"/>
</dbReference>
<dbReference type="Proteomes" id="UP000001973">
    <property type="component" value="Chromosome"/>
</dbReference>
<dbReference type="GO" id="GO:0016597">
    <property type="term" value="F:amino acid binding"/>
    <property type="evidence" value="ECO:0007669"/>
    <property type="project" value="InterPro"/>
</dbReference>
<dbReference type="GO" id="GO:0004070">
    <property type="term" value="F:aspartate carbamoyltransferase activity"/>
    <property type="evidence" value="ECO:0007669"/>
    <property type="project" value="UniProtKB-UniRule"/>
</dbReference>
<dbReference type="GO" id="GO:0006207">
    <property type="term" value="P:'de novo' pyrimidine nucleobase biosynthetic process"/>
    <property type="evidence" value="ECO:0007669"/>
    <property type="project" value="InterPro"/>
</dbReference>
<dbReference type="GO" id="GO:0044205">
    <property type="term" value="P:'de novo' UMP biosynthetic process"/>
    <property type="evidence" value="ECO:0007669"/>
    <property type="project" value="UniProtKB-UniRule"/>
</dbReference>
<dbReference type="GO" id="GO:0006520">
    <property type="term" value="P:amino acid metabolic process"/>
    <property type="evidence" value="ECO:0007669"/>
    <property type="project" value="InterPro"/>
</dbReference>
<dbReference type="FunFam" id="3.40.50.1370:FF:000007">
    <property type="entry name" value="Aspartate carbamoyltransferase"/>
    <property type="match status" value="1"/>
</dbReference>
<dbReference type="FunFam" id="3.40.50.1370:FF:000012">
    <property type="entry name" value="Aspartate carbamoyltransferase"/>
    <property type="match status" value="1"/>
</dbReference>
<dbReference type="Gene3D" id="3.40.50.1370">
    <property type="entry name" value="Aspartate/ornithine carbamoyltransferase"/>
    <property type="match status" value="2"/>
</dbReference>
<dbReference type="HAMAP" id="MF_00001">
    <property type="entry name" value="Asp_carb_tr"/>
    <property type="match status" value="1"/>
</dbReference>
<dbReference type="InterPro" id="IPR006132">
    <property type="entry name" value="Asp/Orn_carbamoyltranf_P-bd"/>
</dbReference>
<dbReference type="InterPro" id="IPR006130">
    <property type="entry name" value="Asp/Orn_carbamoylTrfase"/>
</dbReference>
<dbReference type="InterPro" id="IPR036901">
    <property type="entry name" value="Asp/Orn_carbamoylTrfase_sf"/>
</dbReference>
<dbReference type="InterPro" id="IPR002082">
    <property type="entry name" value="Asp_carbamoyltransf"/>
</dbReference>
<dbReference type="InterPro" id="IPR006131">
    <property type="entry name" value="Asp_carbamoyltransf_Asp/Orn-bd"/>
</dbReference>
<dbReference type="NCBIfam" id="TIGR00670">
    <property type="entry name" value="asp_carb_tr"/>
    <property type="match status" value="1"/>
</dbReference>
<dbReference type="NCBIfam" id="NF002032">
    <property type="entry name" value="PRK00856.1"/>
    <property type="match status" value="1"/>
</dbReference>
<dbReference type="PANTHER" id="PTHR45753:SF6">
    <property type="entry name" value="ASPARTATE CARBAMOYLTRANSFERASE"/>
    <property type="match status" value="1"/>
</dbReference>
<dbReference type="PANTHER" id="PTHR45753">
    <property type="entry name" value="ORNITHINE CARBAMOYLTRANSFERASE, MITOCHONDRIAL"/>
    <property type="match status" value="1"/>
</dbReference>
<dbReference type="Pfam" id="PF00185">
    <property type="entry name" value="OTCace"/>
    <property type="match status" value="1"/>
</dbReference>
<dbReference type="Pfam" id="PF02729">
    <property type="entry name" value="OTCace_N"/>
    <property type="match status" value="1"/>
</dbReference>
<dbReference type="PRINTS" id="PR00100">
    <property type="entry name" value="AOTCASE"/>
</dbReference>
<dbReference type="PRINTS" id="PR00101">
    <property type="entry name" value="ATCASE"/>
</dbReference>
<dbReference type="SUPFAM" id="SSF53671">
    <property type="entry name" value="Aspartate/ornithine carbamoyltransferase"/>
    <property type="match status" value="1"/>
</dbReference>
<dbReference type="PROSITE" id="PS00097">
    <property type="entry name" value="CARBAMOYLTRANSFERASE"/>
    <property type="match status" value="1"/>
</dbReference>
<comment type="function">
    <text evidence="1">Catalyzes the condensation of carbamoyl phosphate and aspartate to form carbamoyl aspartate and inorganic phosphate, the committed step in the de novo pyrimidine nucleotide biosynthesis pathway.</text>
</comment>
<comment type="catalytic activity">
    <reaction evidence="1">
        <text>carbamoyl phosphate + L-aspartate = N-carbamoyl-L-aspartate + phosphate + H(+)</text>
        <dbReference type="Rhea" id="RHEA:20013"/>
        <dbReference type="ChEBI" id="CHEBI:15378"/>
        <dbReference type="ChEBI" id="CHEBI:29991"/>
        <dbReference type="ChEBI" id="CHEBI:32814"/>
        <dbReference type="ChEBI" id="CHEBI:43474"/>
        <dbReference type="ChEBI" id="CHEBI:58228"/>
        <dbReference type="EC" id="2.1.3.2"/>
    </reaction>
</comment>
<comment type="pathway">
    <text evidence="1">Pyrimidine metabolism; UMP biosynthesis via de novo pathway; (S)-dihydroorotate from bicarbonate: step 2/3.</text>
</comment>
<comment type="subunit">
    <text evidence="1">Heterododecamer (2C3:3R2) of six catalytic PyrB chains organized as two trimers (C3), and six regulatory PyrI chains organized as three dimers (R2).</text>
</comment>
<comment type="similarity">
    <text evidence="1">Belongs to the aspartate/ornithine carbamoyltransferase superfamily. ATCase family.</text>
</comment>
<organism>
    <name type="scientific">Streptomyces coelicolor (strain ATCC BAA-471 / A3(2) / M145)</name>
    <dbReference type="NCBI Taxonomy" id="100226"/>
    <lineage>
        <taxon>Bacteria</taxon>
        <taxon>Bacillati</taxon>
        <taxon>Actinomycetota</taxon>
        <taxon>Actinomycetes</taxon>
        <taxon>Kitasatosporales</taxon>
        <taxon>Streptomycetaceae</taxon>
        <taxon>Streptomyces</taxon>
        <taxon>Streptomyces albidoflavus group</taxon>
    </lineage>
</organism>
<accession>Q9KXR2</accession>